<protein>
    <recommendedName>
        <fullName evidence="3">Large ribosomal subunit protein uL14m</fullName>
    </recommendedName>
    <alternativeName>
        <fullName>39S ribosomal protein L14, mitochondrial</fullName>
        <shortName>L14mt</shortName>
        <shortName>MRP-L14</shortName>
    </alternativeName>
</protein>
<accession>Q7ZUH5</accession>
<sequence length="141" mass="15443">MALSLSGLILPKLMQQRAFSVSSAVSAIQKLTRVRVVDNSTLGNAHHHRPPKVIHVYNKNGVGKVGDRVLLAIKGQKKKAIIVGHKMPGARMTPRFDSNNVVLIEDNGNPTGTRIKAPLPTHLRKLEGEYSKLLAIAQRFV</sequence>
<keyword id="KW-0496">Mitochondrion</keyword>
<keyword id="KW-1185">Reference proteome</keyword>
<keyword id="KW-0687">Ribonucleoprotein</keyword>
<keyword id="KW-0689">Ribosomal protein</keyword>
<keyword id="KW-0809">Transit peptide</keyword>
<organism>
    <name type="scientific">Danio rerio</name>
    <name type="common">Zebrafish</name>
    <name type="synonym">Brachydanio rerio</name>
    <dbReference type="NCBI Taxonomy" id="7955"/>
    <lineage>
        <taxon>Eukaryota</taxon>
        <taxon>Metazoa</taxon>
        <taxon>Chordata</taxon>
        <taxon>Craniata</taxon>
        <taxon>Vertebrata</taxon>
        <taxon>Euteleostomi</taxon>
        <taxon>Actinopterygii</taxon>
        <taxon>Neopterygii</taxon>
        <taxon>Teleostei</taxon>
        <taxon>Ostariophysi</taxon>
        <taxon>Cypriniformes</taxon>
        <taxon>Danionidae</taxon>
        <taxon>Danioninae</taxon>
        <taxon>Danio</taxon>
    </lineage>
</organism>
<feature type="transit peptide" description="Mitochondrion" evidence="2">
    <location>
        <begin position="1"/>
        <end position="19"/>
    </location>
</feature>
<feature type="chain" id="PRO_0000261137" description="Large ribosomal subunit protein uL14m">
    <location>
        <begin position="20"/>
        <end position="141"/>
    </location>
</feature>
<evidence type="ECO:0000250" key="1">
    <source>
        <dbReference type="UniProtKB" id="Q6P1L8"/>
    </source>
</evidence>
<evidence type="ECO:0000255" key="2"/>
<evidence type="ECO:0000305" key="3"/>
<proteinExistence type="evidence at transcript level"/>
<reference key="1">
    <citation type="submission" date="2003-03" db="EMBL/GenBank/DDBJ databases">
        <authorList>
            <consortium name="NIH - Zebrafish Gene Collection (ZGC) project"/>
        </authorList>
    </citation>
    <scope>NUCLEOTIDE SEQUENCE [LARGE SCALE MRNA]</scope>
    <source>
        <strain>SJD</strain>
    </source>
</reference>
<dbReference type="EMBL" id="BC049041">
    <property type="protein sequence ID" value="AAH49041.1"/>
    <property type="molecule type" value="mRNA"/>
</dbReference>
<dbReference type="RefSeq" id="NP_957441.1">
    <property type="nucleotide sequence ID" value="NM_201147.2"/>
</dbReference>
<dbReference type="SMR" id="Q7ZUH5"/>
<dbReference type="FunCoup" id="Q7ZUH5">
    <property type="interactions" value="1706"/>
</dbReference>
<dbReference type="STRING" id="7955.ENSDARP00000090555"/>
<dbReference type="PaxDb" id="7955-ENSDARP00000090555"/>
<dbReference type="Ensembl" id="ENSDART00000099782">
    <property type="protein sequence ID" value="ENSDARP00000090555"/>
    <property type="gene ID" value="ENSDARG00000068886"/>
</dbReference>
<dbReference type="GeneID" id="394122"/>
<dbReference type="KEGG" id="dre:394122"/>
<dbReference type="AGR" id="ZFIN:ZDB-GENE-040426-1066"/>
<dbReference type="CTD" id="64928"/>
<dbReference type="ZFIN" id="ZDB-GENE-040426-1066">
    <property type="gene designation" value="mrpl14"/>
</dbReference>
<dbReference type="eggNOG" id="KOG3441">
    <property type="taxonomic scope" value="Eukaryota"/>
</dbReference>
<dbReference type="HOGENOM" id="CLU_128925_1_0_1"/>
<dbReference type="InParanoid" id="Q7ZUH5"/>
<dbReference type="OMA" id="RCIHVYT"/>
<dbReference type="OrthoDB" id="274765at2759"/>
<dbReference type="PhylomeDB" id="Q7ZUH5"/>
<dbReference type="TreeFam" id="TF324586"/>
<dbReference type="Reactome" id="R-DRE-5389840">
    <property type="pathway name" value="Mitochondrial translation elongation"/>
</dbReference>
<dbReference type="Reactome" id="R-DRE-5419276">
    <property type="pathway name" value="Mitochondrial translation termination"/>
</dbReference>
<dbReference type="PRO" id="PR:Q7ZUH5"/>
<dbReference type="Proteomes" id="UP000000437">
    <property type="component" value="Chromosome 13"/>
</dbReference>
<dbReference type="Bgee" id="ENSDARG00000068886">
    <property type="expression patterns" value="Expressed in bone element and 30 other cell types or tissues"/>
</dbReference>
<dbReference type="ExpressionAtlas" id="Q7ZUH5">
    <property type="expression patterns" value="baseline and differential"/>
</dbReference>
<dbReference type="GO" id="GO:0005762">
    <property type="term" value="C:mitochondrial large ribosomal subunit"/>
    <property type="evidence" value="ECO:0000250"/>
    <property type="project" value="UniProtKB"/>
</dbReference>
<dbReference type="GO" id="GO:0005739">
    <property type="term" value="C:mitochondrion"/>
    <property type="evidence" value="ECO:0000318"/>
    <property type="project" value="GO_Central"/>
</dbReference>
<dbReference type="GO" id="GO:0003735">
    <property type="term" value="F:structural constituent of ribosome"/>
    <property type="evidence" value="ECO:0007669"/>
    <property type="project" value="InterPro"/>
</dbReference>
<dbReference type="GO" id="GO:0006412">
    <property type="term" value="P:translation"/>
    <property type="evidence" value="ECO:0007669"/>
    <property type="project" value="InterPro"/>
</dbReference>
<dbReference type="CDD" id="cd00337">
    <property type="entry name" value="Ribosomal_uL14"/>
    <property type="match status" value="1"/>
</dbReference>
<dbReference type="FunFam" id="2.40.150.20:FF:000004">
    <property type="entry name" value="39S ribosomal protein L14, mitochondrial"/>
    <property type="match status" value="1"/>
</dbReference>
<dbReference type="Gene3D" id="2.40.150.20">
    <property type="entry name" value="Ribosomal protein L14"/>
    <property type="match status" value="1"/>
</dbReference>
<dbReference type="HAMAP" id="MF_01367">
    <property type="entry name" value="Ribosomal_uL14"/>
    <property type="match status" value="1"/>
</dbReference>
<dbReference type="InterPro" id="IPR000218">
    <property type="entry name" value="Ribosomal_uL14"/>
</dbReference>
<dbReference type="InterPro" id="IPR036853">
    <property type="entry name" value="Ribosomal_uL14_sf"/>
</dbReference>
<dbReference type="PANTHER" id="PTHR21037">
    <property type="entry name" value="39S RIBOSOMAL PROTEIN L14, MITOCHONDRIAL"/>
    <property type="match status" value="1"/>
</dbReference>
<dbReference type="PANTHER" id="PTHR21037:SF3">
    <property type="entry name" value="LARGE RIBOSOMAL SUBUNIT PROTEIN UL14M"/>
    <property type="match status" value="1"/>
</dbReference>
<dbReference type="Pfam" id="PF00238">
    <property type="entry name" value="Ribosomal_L14"/>
    <property type="match status" value="1"/>
</dbReference>
<dbReference type="SMART" id="SM01374">
    <property type="entry name" value="Ribosomal_L14"/>
    <property type="match status" value="1"/>
</dbReference>
<dbReference type="SUPFAM" id="SSF50193">
    <property type="entry name" value="Ribosomal protein L14"/>
    <property type="match status" value="1"/>
</dbReference>
<name>RM14_DANRE</name>
<comment type="function">
    <text evidence="1">May form part of 2 intersubunit bridges in the assembled ribosome. Upon binding to MALSU1, intersubunit bridge formation is blocked, preventing ribosome formation and repressing translation.</text>
</comment>
<comment type="subunit">
    <text evidence="1">Component of the mitochondrial ribosome large subunit (39S) which comprises a 16S rRNA and about 50 distinct proteins. Interacts with MALSU1.</text>
</comment>
<comment type="subcellular location">
    <subcellularLocation>
        <location evidence="1">Mitochondrion</location>
    </subcellularLocation>
</comment>
<comment type="similarity">
    <text evidence="3">Belongs to the universal ribosomal protein uL14 family.</text>
</comment>
<gene>
    <name type="primary">mrpl14</name>
    <name type="ORF">zgc:56531</name>
</gene>